<comment type="function">
    <text evidence="1">Binds to the 23S rRNA.</text>
</comment>
<comment type="similarity">
    <text evidence="1">Belongs to the bacterial ribosomal protein bL9 family.</text>
</comment>
<sequence>MKLILTAEVDHLGEPGDTVEVKDGYGRNYLLPRGLAIVASRGAQRQADDIRRARELKTVKGLEHANEIKTALEALDTVELAVNASADTGKLFGSVTATDVVAAIKKAGGPNLDKRTVALPKAHIKSLGTHSVSVRLHPGVEASVSLNVVAES</sequence>
<dbReference type="EMBL" id="CP000384">
    <property type="protein sequence ID" value="ABG11467.1"/>
    <property type="molecule type" value="Genomic_DNA"/>
</dbReference>
<dbReference type="SMR" id="Q1B0W7"/>
<dbReference type="KEGG" id="mmc:Mmcs_5367"/>
<dbReference type="HOGENOM" id="CLU_078938_5_1_11"/>
<dbReference type="BioCyc" id="MSP164756:G1G6O-5479-MONOMER"/>
<dbReference type="GO" id="GO:1990904">
    <property type="term" value="C:ribonucleoprotein complex"/>
    <property type="evidence" value="ECO:0007669"/>
    <property type="project" value="UniProtKB-KW"/>
</dbReference>
<dbReference type="GO" id="GO:0005840">
    <property type="term" value="C:ribosome"/>
    <property type="evidence" value="ECO:0007669"/>
    <property type="project" value="UniProtKB-KW"/>
</dbReference>
<dbReference type="GO" id="GO:0019843">
    <property type="term" value="F:rRNA binding"/>
    <property type="evidence" value="ECO:0007669"/>
    <property type="project" value="UniProtKB-UniRule"/>
</dbReference>
<dbReference type="GO" id="GO:0003735">
    <property type="term" value="F:structural constituent of ribosome"/>
    <property type="evidence" value="ECO:0007669"/>
    <property type="project" value="InterPro"/>
</dbReference>
<dbReference type="GO" id="GO:0006412">
    <property type="term" value="P:translation"/>
    <property type="evidence" value="ECO:0007669"/>
    <property type="project" value="UniProtKB-UniRule"/>
</dbReference>
<dbReference type="FunFam" id="3.40.5.10:FF:000003">
    <property type="entry name" value="50S ribosomal protein L9"/>
    <property type="match status" value="1"/>
</dbReference>
<dbReference type="Gene3D" id="3.10.430.100">
    <property type="entry name" value="Ribosomal protein L9, C-terminal domain"/>
    <property type="match status" value="1"/>
</dbReference>
<dbReference type="Gene3D" id="3.40.5.10">
    <property type="entry name" value="Ribosomal protein L9, N-terminal domain"/>
    <property type="match status" value="1"/>
</dbReference>
<dbReference type="HAMAP" id="MF_00503">
    <property type="entry name" value="Ribosomal_bL9"/>
    <property type="match status" value="1"/>
</dbReference>
<dbReference type="InterPro" id="IPR000244">
    <property type="entry name" value="Ribosomal_bL9"/>
</dbReference>
<dbReference type="InterPro" id="IPR009027">
    <property type="entry name" value="Ribosomal_bL9/RNase_H1_N"/>
</dbReference>
<dbReference type="InterPro" id="IPR020594">
    <property type="entry name" value="Ribosomal_bL9_bac/chp"/>
</dbReference>
<dbReference type="InterPro" id="IPR020069">
    <property type="entry name" value="Ribosomal_bL9_C"/>
</dbReference>
<dbReference type="InterPro" id="IPR036791">
    <property type="entry name" value="Ribosomal_bL9_C_sf"/>
</dbReference>
<dbReference type="InterPro" id="IPR020070">
    <property type="entry name" value="Ribosomal_bL9_N"/>
</dbReference>
<dbReference type="InterPro" id="IPR036935">
    <property type="entry name" value="Ribosomal_bL9_N_sf"/>
</dbReference>
<dbReference type="NCBIfam" id="TIGR00158">
    <property type="entry name" value="L9"/>
    <property type="match status" value="1"/>
</dbReference>
<dbReference type="PANTHER" id="PTHR21368">
    <property type="entry name" value="50S RIBOSOMAL PROTEIN L9"/>
    <property type="match status" value="1"/>
</dbReference>
<dbReference type="Pfam" id="PF03948">
    <property type="entry name" value="Ribosomal_L9_C"/>
    <property type="match status" value="1"/>
</dbReference>
<dbReference type="Pfam" id="PF01281">
    <property type="entry name" value="Ribosomal_L9_N"/>
    <property type="match status" value="1"/>
</dbReference>
<dbReference type="SUPFAM" id="SSF55658">
    <property type="entry name" value="L9 N-domain-like"/>
    <property type="match status" value="1"/>
</dbReference>
<dbReference type="SUPFAM" id="SSF55653">
    <property type="entry name" value="Ribosomal protein L9 C-domain"/>
    <property type="match status" value="1"/>
</dbReference>
<dbReference type="PROSITE" id="PS00651">
    <property type="entry name" value="RIBOSOMAL_L9"/>
    <property type="match status" value="1"/>
</dbReference>
<gene>
    <name evidence="1" type="primary">rplI</name>
    <name type="ordered locus">Mmcs_5367</name>
</gene>
<proteinExistence type="inferred from homology"/>
<reference key="1">
    <citation type="submission" date="2006-06" db="EMBL/GenBank/DDBJ databases">
        <title>Complete sequence of chromosome of Mycobacterium sp. MCS.</title>
        <authorList>
            <consortium name="US DOE Joint Genome Institute"/>
            <person name="Copeland A."/>
            <person name="Lucas S."/>
            <person name="Lapidus A."/>
            <person name="Barry K."/>
            <person name="Detter J.C."/>
            <person name="Glavina del Rio T."/>
            <person name="Hammon N."/>
            <person name="Israni S."/>
            <person name="Dalin E."/>
            <person name="Tice H."/>
            <person name="Pitluck S."/>
            <person name="Martinez M."/>
            <person name="Schmutz J."/>
            <person name="Larimer F."/>
            <person name="Land M."/>
            <person name="Hauser L."/>
            <person name="Kyrpides N."/>
            <person name="Kim E."/>
            <person name="Miller C.D."/>
            <person name="Hughes J.E."/>
            <person name="Anderson A.J."/>
            <person name="Sims R.C."/>
            <person name="Richardson P."/>
        </authorList>
    </citation>
    <scope>NUCLEOTIDE SEQUENCE [LARGE SCALE GENOMIC DNA]</scope>
    <source>
        <strain>MCS</strain>
    </source>
</reference>
<keyword id="KW-0687">Ribonucleoprotein</keyword>
<keyword id="KW-0689">Ribosomal protein</keyword>
<keyword id="KW-0694">RNA-binding</keyword>
<keyword id="KW-0699">rRNA-binding</keyword>
<feature type="chain" id="PRO_1000014814" description="Large ribosomal subunit protein bL9">
    <location>
        <begin position="1"/>
        <end position="152"/>
    </location>
</feature>
<accession>Q1B0W7</accession>
<protein>
    <recommendedName>
        <fullName evidence="1">Large ribosomal subunit protein bL9</fullName>
    </recommendedName>
    <alternativeName>
        <fullName evidence="2">50S ribosomal protein L9</fullName>
    </alternativeName>
</protein>
<evidence type="ECO:0000255" key="1">
    <source>
        <dbReference type="HAMAP-Rule" id="MF_00503"/>
    </source>
</evidence>
<evidence type="ECO:0000305" key="2"/>
<name>RL9_MYCSS</name>
<organism>
    <name type="scientific">Mycobacterium sp. (strain MCS)</name>
    <dbReference type="NCBI Taxonomy" id="164756"/>
    <lineage>
        <taxon>Bacteria</taxon>
        <taxon>Bacillati</taxon>
        <taxon>Actinomycetota</taxon>
        <taxon>Actinomycetes</taxon>
        <taxon>Mycobacteriales</taxon>
        <taxon>Mycobacteriaceae</taxon>
        <taxon>Mycobacterium</taxon>
    </lineage>
</organism>